<evidence type="ECO:0000250" key="1"/>
<evidence type="ECO:0000250" key="2">
    <source>
        <dbReference type="UniProtKB" id="P08709"/>
    </source>
</evidence>
<evidence type="ECO:0000250" key="3">
    <source>
        <dbReference type="UniProtKB" id="P22457"/>
    </source>
</evidence>
<evidence type="ECO:0000255" key="4"/>
<evidence type="ECO:0000255" key="5">
    <source>
        <dbReference type="PROSITE-ProRule" id="PRU00076"/>
    </source>
</evidence>
<evidence type="ECO:0000255" key="6">
    <source>
        <dbReference type="PROSITE-ProRule" id="PRU00274"/>
    </source>
</evidence>
<evidence type="ECO:0000255" key="7">
    <source>
        <dbReference type="PROSITE-ProRule" id="PRU00463"/>
    </source>
</evidence>
<sequence length="446" mass="50399">MVPQTHGLLLLYFLLQLQGPLGAVVFITQEEAHGVLHRQRRANSLLEELWSSSLERECNEERCSFEEAREIFKSPERTKQFWTIYSDGDQCASNPCQNGGTCQDHLKSYVCFCPLDFEGRNCEKNKNEQLICANENGDCDQYCRDHVGTKRTCSCHEDYVLQPDEVSCKPKVEYPCGRIPVVEKRNFSRPQGRIVGGYVCPKGECPWQAVLKFNEALLCGAVLLDTRWIVTAAHCFDKFGKLVNITVVLGEHDFSEKEGTEQVRLVEQVIMPNKYTRGRTDHDIALVRLHRPVTFTDYVVPLCLPERAFSENTLASIRFSRVSGWGQLLDRGATALELMVIEVPRLMTQDCLEHAKHSANTPRITENMFCAGYMDGTKDACKGDSGGPHATHYHGTWYLTGVVSWGEGCAAIGHIGVYTRVSQYIDWLVKYMDSKLRVGISRVSLL</sequence>
<keyword id="KW-0094">Blood coagulation</keyword>
<keyword id="KW-0106">Calcium</keyword>
<keyword id="KW-0165">Cleavage on pair of basic residues</keyword>
<keyword id="KW-1015">Disulfide bond</keyword>
<keyword id="KW-0245">EGF-like domain</keyword>
<keyword id="KW-0301">Gamma-carboxyglutamic acid</keyword>
<keyword id="KW-0325">Glycoprotein</keyword>
<keyword id="KW-0356">Hemostasis</keyword>
<keyword id="KW-0378">Hydrolase</keyword>
<keyword id="KW-0379">Hydroxylation</keyword>
<keyword id="KW-0645">Protease</keyword>
<keyword id="KW-1185">Reference proteome</keyword>
<keyword id="KW-0677">Repeat</keyword>
<keyword id="KW-0964">Secreted</keyword>
<keyword id="KW-0720">Serine protease</keyword>
<keyword id="KW-0732">Signal</keyword>
<keyword id="KW-0865">Zymogen</keyword>
<gene>
    <name type="primary">F7</name>
</gene>
<reference key="1">
    <citation type="submission" date="2002-07" db="EMBL/GenBank/DDBJ databases">
        <title>Nucleotide sequence of the cDNA encoding rat coagulation factor VII.</title>
        <authorList>
            <person name="Murphy K."/>
            <person name="Ramaker M."/>
        </authorList>
    </citation>
    <scope>NUCLEOTIDE SEQUENCE [MRNA]</scope>
    <source>
        <strain>Sprague-Dawley</strain>
    </source>
</reference>
<comment type="function">
    <text evidence="1">Initiates the extrinsic pathway of blood coagulation. Serine protease that circulates in the blood in a zymogen form. Factor VII is converted to factor VIIa by factor Xa, factor XIIa, factor IXa, or thrombin by minor proteolysis. In the presence of tissue factor and calcium ions, factor VIIa then converts factor X to factor Xa by limited proteolysis. Factor VIIa also converts factor IX to factor IXa in the presence of tissue factor and calcium (By similarity).</text>
</comment>
<comment type="catalytic activity">
    <reaction>
        <text>Selective cleavage of Arg-|-Ile bond in factor X to form factor Xa.</text>
        <dbReference type="EC" id="3.4.21.21"/>
    </reaction>
</comment>
<comment type="subunit">
    <text evidence="1">Heterodimer of a light chain and a heavy chain linked by a disulfide bond.</text>
</comment>
<comment type="subcellular location">
    <subcellularLocation>
        <location evidence="1">Secreted</location>
    </subcellularLocation>
</comment>
<comment type="tissue specificity">
    <text>Plasma.</text>
</comment>
<comment type="PTM">
    <text evidence="1">The vitamin K-dependent, enzymatic carboxylation of some glutamate residues allows the modified protein to bind calcium.</text>
</comment>
<comment type="PTM">
    <text evidence="1">The iron and 2-oxoglutarate dependent 3-hydroxylation of aspartate and asparagine is (R) stereospecific within EGF domains.</text>
</comment>
<comment type="PTM">
    <text evidence="1">Can be either O-glucosylated or O-xylosylated at Ser-93 by POGLUT1.</text>
</comment>
<comment type="similarity">
    <text evidence="6">Belongs to the peptidase S1 family.</text>
</comment>
<organism>
    <name type="scientific">Rattus norvegicus</name>
    <name type="common">Rat</name>
    <dbReference type="NCBI Taxonomy" id="10116"/>
    <lineage>
        <taxon>Eukaryota</taxon>
        <taxon>Metazoa</taxon>
        <taxon>Chordata</taxon>
        <taxon>Craniata</taxon>
        <taxon>Vertebrata</taxon>
        <taxon>Euteleostomi</taxon>
        <taxon>Mammalia</taxon>
        <taxon>Eutheria</taxon>
        <taxon>Euarchontoglires</taxon>
        <taxon>Glires</taxon>
        <taxon>Rodentia</taxon>
        <taxon>Myomorpha</taxon>
        <taxon>Muroidea</taxon>
        <taxon>Muridae</taxon>
        <taxon>Murinae</taxon>
        <taxon>Rattus</taxon>
    </lineage>
</organism>
<name>FA7_RAT</name>
<feature type="signal peptide" evidence="4">
    <location>
        <begin position="1"/>
        <end position="24"/>
    </location>
</feature>
<feature type="propeptide" id="PRO_0000027738" evidence="4">
    <location>
        <begin position="25"/>
        <end position="41"/>
    </location>
</feature>
<feature type="chain" id="PRO_0000027739" description="Factor VII light chain" evidence="1">
    <location>
        <begin position="42"/>
        <end position="193"/>
    </location>
</feature>
<feature type="chain" id="PRO_0000027740" description="Factor VII heavy chain" evidence="1">
    <location>
        <begin position="194"/>
        <end position="446"/>
    </location>
</feature>
<feature type="domain" description="Gla" evidence="7">
    <location>
        <begin position="42"/>
        <end position="86"/>
    </location>
</feature>
<feature type="domain" description="EGF-like 1; calcium-binding" evidence="5">
    <location>
        <begin position="87"/>
        <end position="123"/>
    </location>
</feature>
<feature type="domain" description="EGF-like 2" evidence="5">
    <location>
        <begin position="128"/>
        <end position="169"/>
    </location>
</feature>
<feature type="domain" description="Peptidase S1" evidence="6">
    <location>
        <begin position="194"/>
        <end position="433"/>
    </location>
</feature>
<feature type="active site" description="Charge relay system" evidence="1">
    <location>
        <position position="234"/>
    </location>
</feature>
<feature type="active site" description="Charge relay system" evidence="1">
    <location>
        <position position="283"/>
    </location>
</feature>
<feature type="active site" description="Charge relay system" evidence="1">
    <location>
        <position position="385"/>
    </location>
</feature>
<feature type="binding site" evidence="1">
    <location>
        <position position="379"/>
    </location>
    <ligand>
        <name>substrate</name>
    </ligand>
</feature>
<feature type="site" description="Cleavage; by factor Xa, factor XIIa, factor IXa, or thrombin" evidence="1">
    <location>
        <begin position="193"/>
        <end position="194"/>
    </location>
</feature>
<feature type="modified residue" description="4-carboxyglutamate" evidence="3 7">
    <location>
        <position position="47"/>
    </location>
</feature>
<feature type="modified residue" description="4-carboxyglutamate" evidence="3 7">
    <location>
        <position position="48"/>
    </location>
</feature>
<feature type="modified residue" description="4-carboxyglutamate" evidence="3 7">
    <location>
        <position position="55"/>
    </location>
</feature>
<feature type="modified residue" description="4-carboxyglutamate" evidence="3 7">
    <location>
        <position position="57"/>
    </location>
</feature>
<feature type="modified residue" description="4-carboxyglutamate" evidence="3 7">
    <location>
        <position position="60"/>
    </location>
</feature>
<feature type="modified residue" description="4-carboxyglutamate" evidence="3 7">
    <location>
        <position position="61"/>
    </location>
</feature>
<feature type="modified residue" description="4-carboxyglutamate" evidence="3 7">
    <location>
        <position position="66"/>
    </location>
</feature>
<feature type="modified residue" description="4-carboxyglutamate" evidence="3 7">
    <location>
        <position position="67"/>
    </location>
</feature>
<feature type="modified residue" description="4-carboxyglutamate" evidence="3 7">
    <location>
        <position position="70"/>
    </location>
</feature>
<feature type="modified residue" description="4-carboxyglutamate" evidence="3 7">
    <location>
        <position position="76"/>
    </location>
</feature>
<feature type="modified residue" description="(3R)-3-hydroxyaspartate" evidence="1">
    <location>
        <position position="104"/>
    </location>
</feature>
<feature type="glycosylation site" description="O-linked (Glc...) serine; alternate" evidence="2">
    <location>
        <position position="93"/>
    </location>
</feature>
<feature type="glycosylation site" description="O-linked (Xyl...) serine; alternate" evidence="2">
    <location>
        <position position="93"/>
    </location>
</feature>
<feature type="glycosylation site" description="O-linked (Fuc) threonine" evidence="1">
    <location>
        <position position="101"/>
    </location>
</feature>
<feature type="glycosylation site" description="N-linked (GlcNAc...) asparagine" evidence="4">
    <location>
        <position position="186"/>
    </location>
</feature>
<feature type="glycosylation site" description="N-linked (GlcNAc...) asparagine" evidence="4">
    <location>
        <position position="244"/>
    </location>
</feature>
<feature type="disulfide bond" evidence="1">
    <location>
        <begin position="58"/>
        <end position="63"/>
    </location>
</feature>
<feature type="disulfide bond" evidence="1">
    <location>
        <begin position="91"/>
        <end position="102"/>
    </location>
</feature>
<feature type="disulfide bond" evidence="1">
    <location>
        <begin position="96"/>
        <end position="111"/>
    </location>
</feature>
<feature type="disulfide bond" evidence="1">
    <location>
        <begin position="113"/>
        <end position="122"/>
    </location>
</feature>
<feature type="disulfide bond" evidence="1">
    <location>
        <begin position="132"/>
        <end position="143"/>
    </location>
</feature>
<feature type="disulfide bond" evidence="1">
    <location>
        <begin position="139"/>
        <end position="153"/>
    </location>
</feature>
<feature type="disulfide bond" evidence="1">
    <location>
        <begin position="155"/>
        <end position="168"/>
    </location>
</feature>
<feature type="disulfide bond" evidence="1">
    <location>
        <begin position="176"/>
        <end position="303"/>
    </location>
</feature>
<feature type="disulfide bond" evidence="1">
    <location>
        <begin position="200"/>
        <end position="205"/>
    </location>
</feature>
<feature type="disulfide bond" evidence="1">
    <location>
        <begin position="219"/>
        <end position="235"/>
    </location>
</feature>
<feature type="disulfide bond" evidence="1">
    <location>
        <begin position="351"/>
        <end position="370"/>
    </location>
</feature>
<feature type="disulfide bond" evidence="1">
    <location>
        <begin position="381"/>
        <end position="409"/>
    </location>
</feature>
<proteinExistence type="evidence at transcript level"/>
<protein>
    <recommendedName>
        <fullName>Coagulation factor VII</fullName>
        <ecNumber>3.4.21.21</ecNumber>
    </recommendedName>
    <alternativeName>
        <fullName>Serum prothrombin conversion accelerator</fullName>
    </alternativeName>
    <component>
        <recommendedName>
            <fullName>Factor VII light chain</fullName>
        </recommendedName>
    </component>
    <component>
        <recommendedName>
            <fullName>Factor VII heavy chain</fullName>
        </recommendedName>
    </component>
</protein>
<dbReference type="EC" id="3.4.21.21"/>
<dbReference type="EMBL" id="AF532184">
    <property type="protein sequence ID" value="AAM95967.1"/>
    <property type="molecule type" value="mRNA"/>
</dbReference>
<dbReference type="RefSeq" id="NP_690059.1">
    <property type="nucleotide sequence ID" value="NM_152846.2"/>
</dbReference>
<dbReference type="SMR" id="Q8K3U6"/>
<dbReference type="FunCoup" id="Q8K3U6">
    <property type="interactions" value="46"/>
</dbReference>
<dbReference type="STRING" id="10116.ENSRNOP00000038466"/>
<dbReference type="MEROPS" id="S01.215"/>
<dbReference type="GlyCosmos" id="Q8K3U6">
    <property type="glycosylation" value="4 sites, No reported glycans"/>
</dbReference>
<dbReference type="GlyGen" id="Q8K3U6">
    <property type="glycosylation" value="4 sites"/>
</dbReference>
<dbReference type="PhosphoSitePlus" id="Q8K3U6"/>
<dbReference type="PaxDb" id="10116-ENSRNOP00000038466"/>
<dbReference type="Ensembl" id="ENSRNOT00000037806.3">
    <property type="protein sequence ID" value="ENSRNOP00000038466.1"/>
    <property type="gene ID" value="ENSRNOG00000032737.6"/>
</dbReference>
<dbReference type="GeneID" id="260320"/>
<dbReference type="KEGG" id="rno:260320"/>
<dbReference type="UCSC" id="RGD:628678">
    <property type="organism name" value="rat"/>
</dbReference>
<dbReference type="AGR" id="RGD:628678"/>
<dbReference type="CTD" id="2155"/>
<dbReference type="RGD" id="628678">
    <property type="gene designation" value="F7"/>
</dbReference>
<dbReference type="eggNOG" id="ENOG502QRGI">
    <property type="taxonomic scope" value="Eukaryota"/>
</dbReference>
<dbReference type="GeneTree" id="ENSGT00940000154474"/>
<dbReference type="HOGENOM" id="CLU_006842_19_5_1"/>
<dbReference type="InParanoid" id="Q8K3U6"/>
<dbReference type="OMA" id="QGRNCET"/>
<dbReference type="OrthoDB" id="10004439at2759"/>
<dbReference type="PhylomeDB" id="Q8K3U6"/>
<dbReference type="TreeFam" id="TF327329"/>
<dbReference type="Reactome" id="R-RNO-140834">
    <property type="pathway name" value="Extrinsic Pathway of Fibrin Clot Formation"/>
</dbReference>
<dbReference type="Reactome" id="R-RNO-159740">
    <property type="pathway name" value="Gamma-carboxylation of protein precursors"/>
</dbReference>
<dbReference type="Reactome" id="R-RNO-159763">
    <property type="pathway name" value="Transport of gamma-carboxylated protein precursors from the endoplasmic reticulum to the Golgi apparatus"/>
</dbReference>
<dbReference type="Reactome" id="R-RNO-159782">
    <property type="pathway name" value="Removal of aminoterminal propeptides from gamma-carboxylated proteins"/>
</dbReference>
<dbReference type="PRO" id="PR:Q8K3U6"/>
<dbReference type="Proteomes" id="UP000002494">
    <property type="component" value="Chromosome 16"/>
</dbReference>
<dbReference type="Bgee" id="ENSRNOG00000032737">
    <property type="expression patterns" value="Expressed in liver and 3 other cell types or tissues"/>
</dbReference>
<dbReference type="GO" id="GO:0005615">
    <property type="term" value="C:extracellular space"/>
    <property type="evidence" value="ECO:0000314"/>
    <property type="project" value="RGD"/>
</dbReference>
<dbReference type="GO" id="GO:1905286">
    <property type="term" value="C:serine-type peptidase complex"/>
    <property type="evidence" value="ECO:0000266"/>
    <property type="project" value="RGD"/>
</dbReference>
<dbReference type="GO" id="GO:0031982">
    <property type="term" value="C:vesicle"/>
    <property type="evidence" value="ECO:0000314"/>
    <property type="project" value="RGD"/>
</dbReference>
<dbReference type="GO" id="GO:0005509">
    <property type="term" value="F:calcium ion binding"/>
    <property type="evidence" value="ECO:0007669"/>
    <property type="project" value="InterPro"/>
</dbReference>
<dbReference type="GO" id="GO:0004175">
    <property type="term" value="F:endopeptidase activity"/>
    <property type="evidence" value="ECO:0000314"/>
    <property type="project" value="RGD"/>
</dbReference>
<dbReference type="GO" id="GO:0004252">
    <property type="term" value="F:serine-type endopeptidase activity"/>
    <property type="evidence" value="ECO:0000318"/>
    <property type="project" value="GO_Central"/>
</dbReference>
<dbReference type="GO" id="GO:0005102">
    <property type="term" value="F:signaling receptor binding"/>
    <property type="evidence" value="ECO:0000353"/>
    <property type="project" value="RGD"/>
</dbReference>
<dbReference type="GO" id="GO:0031100">
    <property type="term" value="P:animal organ regeneration"/>
    <property type="evidence" value="ECO:0000270"/>
    <property type="project" value="RGD"/>
</dbReference>
<dbReference type="GO" id="GO:0007596">
    <property type="term" value="P:blood coagulation"/>
    <property type="evidence" value="ECO:0000266"/>
    <property type="project" value="RGD"/>
</dbReference>
<dbReference type="GO" id="GO:0007623">
    <property type="term" value="P:circadian rhythm"/>
    <property type="evidence" value="ECO:0000270"/>
    <property type="project" value="RGD"/>
</dbReference>
<dbReference type="GO" id="GO:0030194">
    <property type="term" value="P:positive regulation of blood coagulation"/>
    <property type="evidence" value="ECO:0000314"/>
    <property type="project" value="RGD"/>
</dbReference>
<dbReference type="GO" id="GO:0002690">
    <property type="term" value="P:positive regulation of leukocyte chemotaxis"/>
    <property type="evidence" value="ECO:0000266"/>
    <property type="project" value="RGD"/>
</dbReference>
<dbReference type="GO" id="GO:0010641">
    <property type="term" value="P:positive regulation of platelet-derived growth factor receptor signaling pathway"/>
    <property type="evidence" value="ECO:0000266"/>
    <property type="project" value="RGD"/>
</dbReference>
<dbReference type="GO" id="GO:0050927">
    <property type="term" value="P:positive regulation of positive chemotaxis"/>
    <property type="evidence" value="ECO:0000266"/>
    <property type="project" value="RGD"/>
</dbReference>
<dbReference type="GO" id="GO:0032008">
    <property type="term" value="P:positive regulation of TOR signaling"/>
    <property type="evidence" value="ECO:0000266"/>
    <property type="project" value="RGD"/>
</dbReference>
<dbReference type="GO" id="GO:0016485">
    <property type="term" value="P:protein processing"/>
    <property type="evidence" value="ECO:0000266"/>
    <property type="project" value="RGD"/>
</dbReference>
<dbReference type="GO" id="GO:1904612">
    <property type="term" value="P:response to 2,3,7,8-tetrachlorodibenzodioxine"/>
    <property type="evidence" value="ECO:0000270"/>
    <property type="project" value="RGD"/>
</dbReference>
<dbReference type="GO" id="GO:1905217">
    <property type="term" value="P:response to astaxanthin"/>
    <property type="evidence" value="ECO:0000314"/>
    <property type="project" value="RGD"/>
</dbReference>
<dbReference type="GO" id="GO:0010037">
    <property type="term" value="P:response to carbon dioxide"/>
    <property type="evidence" value="ECO:0000270"/>
    <property type="project" value="RGD"/>
</dbReference>
<dbReference type="GO" id="GO:0070723">
    <property type="term" value="P:response to cholesterol"/>
    <property type="evidence" value="ECO:0000314"/>
    <property type="project" value="RGD"/>
</dbReference>
<dbReference type="GO" id="GO:0032355">
    <property type="term" value="P:response to estradiol"/>
    <property type="evidence" value="ECO:0000270"/>
    <property type="project" value="RGD"/>
</dbReference>
<dbReference type="GO" id="GO:0043627">
    <property type="term" value="P:response to estrogen"/>
    <property type="evidence" value="ECO:0000270"/>
    <property type="project" value="RGD"/>
</dbReference>
<dbReference type="GO" id="GO:0033595">
    <property type="term" value="P:response to genistein"/>
    <property type="evidence" value="ECO:0000270"/>
    <property type="project" value="RGD"/>
</dbReference>
<dbReference type="GO" id="GO:0060416">
    <property type="term" value="P:response to growth hormone"/>
    <property type="evidence" value="ECO:0000270"/>
    <property type="project" value="RGD"/>
</dbReference>
<dbReference type="GO" id="GO:0009725">
    <property type="term" value="P:response to hormone"/>
    <property type="evidence" value="ECO:0000270"/>
    <property type="project" value="RGD"/>
</dbReference>
<dbReference type="GO" id="GO:0001666">
    <property type="term" value="P:response to hypoxia"/>
    <property type="evidence" value="ECO:0000270"/>
    <property type="project" value="RGD"/>
</dbReference>
<dbReference type="GO" id="GO:0031667">
    <property type="term" value="P:response to nutrient levels"/>
    <property type="evidence" value="ECO:0000314"/>
    <property type="project" value="RGD"/>
</dbReference>
<dbReference type="GO" id="GO:0097066">
    <property type="term" value="P:response to thyroid hormone"/>
    <property type="evidence" value="ECO:0000270"/>
    <property type="project" value="RGD"/>
</dbReference>
<dbReference type="GO" id="GO:1904400">
    <property type="term" value="P:response to Thyroid stimulating hormone"/>
    <property type="evidence" value="ECO:0000270"/>
    <property type="project" value="RGD"/>
</dbReference>
<dbReference type="GO" id="GO:1905225">
    <property type="term" value="P:response to thyrotropin-releasing hormone"/>
    <property type="evidence" value="ECO:0000270"/>
    <property type="project" value="RGD"/>
</dbReference>
<dbReference type="GO" id="GO:0097068">
    <property type="term" value="P:response to thyroxine"/>
    <property type="evidence" value="ECO:0000270"/>
    <property type="project" value="RGD"/>
</dbReference>
<dbReference type="GO" id="GO:0032571">
    <property type="term" value="P:response to vitamin K"/>
    <property type="evidence" value="ECO:0000270"/>
    <property type="project" value="RGD"/>
</dbReference>
<dbReference type="CDD" id="cd00054">
    <property type="entry name" value="EGF_CA"/>
    <property type="match status" value="1"/>
</dbReference>
<dbReference type="CDD" id="cd00190">
    <property type="entry name" value="Tryp_SPc"/>
    <property type="match status" value="1"/>
</dbReference>
<dbReference type="FunFam" id="2.10.25.10:FF:000259">
    <property type="entry name" value="Coagulation factor VII"/>
    <property type="match status" value="1"/>
</dbReference>
<dbReference type="FunFam" id="2.10.25.10:FF:000420">
    <property type="entry name" value="Coagulation factor VII"/>
    <property type="match status" value="1"/>
</dbReference>
<dbReference type="FunFam" id="2.40.10.10:FF:000013">
    <property type="entry name" value="Coagulation factor X"/>
    <property type="match status" value="1"/>
</dbReference>
<dbReference type="FunFam" id="4.10.740.10:FF:000001">
    <property type="entry name" value="vitamin K-dependent protein S"/>
    <property type="match status" value="1"/>
</dbReference>
<dbReference type="Gene3D" id="4.10.740.10">
    <property type="entry name" value="Coagulation Factor IX"/>
    <property type="match status" value="1"/>
</dbReference>
<dbReference type="Gene3D" id="2.10.25.10">
    <property type="entry name" value="Laminin"/>
    <property type="match status" value="2"/>
</dbReference>
<dbReference type="Gene3D" id="2.40.10.10">
    <property type="entry name" value="Trypsin-like serine proteases"/>
    <property type="match status" value="2"/>
</dbReference>
<dbReference type="InterPro" id="IPR017857">
    <property type="entry name" value="Coagulation_fac-like_Gla_dom"/>
</dbReference>
<dbReference type="InterPro" id="IPR001881">
    <property type="entry name" value="EGF-like_Ca-bd_dom"/>
</dbReference>
<dbReference type="InterPro" id="IPR000742">
    <property type="entry name" value="EGF-like_dom"/>
</dbReference>
<dbReference type="InterPro" id="IPR000152">
    <property type="entry name" value="EGF-type_Asp/Asn_hydroxyl_site"/>
</dbReference>
<dbReference type="InterPro" id="IPR018097">
    <property type="entry name" value="EGF_Ca-bd_CS"/>
</dbReference>
<dbReference type="InterPro" id="IPR035972">
    <property type="entry name" value="GLA-like_dom_SF"/>
</dbReference>
<dbReference type="InterPro" id="IPR000294">
    <property type="entry name" value="GLA_domain"/>
</dbReference>
<dbReference type="InterPro" id="IPR012224">
    <property type="entry name" value="Pept_S1A_FX"/>
</dbReference>
<dbReference type="InterPro" id="IPR050442">
    <property type="entry name" value="Peptidase_S1_coag_factors"/>
</dbReference>
<dbReference type="InterPro" id="IPR009003">
    <property type="entry name" value="Peptidase_S1_PA"/>
</dbReference>
<dbReference type="InterPro" id="IPR043504">
    <property type="entry name" value="Peptidase_S1_PA_chymotrypsin"/>
</dbReference>
<dbReference type="InterPro" id="IPR001314">
    <property type="entry name" value="Peptidase_S1A"/>
</dbReference>
<dbReference type="InterPro" id="IPR001254">
    <property type="entry name" value="Trypsin_dom"/>
</dbReference>
<dbReference type="InterPro" id="IPR018114">
    <property type="entry name" value="TRYPSIN_HIS"/>
</dbReference>
<dbReference type="InterPro" id="IPR033116">
    <property type="entry name" value="TRYPSIN_SER"/>
</dbReference>
<dbReference type="PANTHER" id="PTHR24278">
    <property type="entry name" value="COAGULATION FACTOR"/>
    <property type="match status" value="1"/>
</dbReference>
<dbReference type="PANTHER" id="PTHR24278:SF26">
    <property type="entry name" value="COAGULATION FACTOR VII"/>
    <property type="match status" value="1"/>
</dbReference>
<dbReference type="Pfam" id="PF00008">
    <property type="entry name" value="EGF"/>
    <property type="match status" value="1"/>
</dbReference>
<dbReference type="Pfam" id="PF14670">
    <property type="entry name" value="FXa_inhibition"/>
    <property type="match status" value="1"/>
</dbReference>
<dbReference type="Pfam" id="PF00594">
    <property type="entry name" value="Gla"/>
    <property type="match status" value="1"/>
</dbReference>
<dbReference type="Pfam" id="PF00089">
    <property type="entry name" value="Trypsin"/>
    <property type="match status" value="1"/>
</dbReference>
<dbReference type="PIRSF" id="PIRSF001143">
    <property type="entry name" value="Factor_X"/>
    <property type="match status" value="1"/>
</dbReference>
<dbReference type="PRINTS" id="PR00722">
    <property type="entry name" value="CHYMOTRYPSIN"/>
</dbReference>
<dbReference type="PRINTS" id="PR00010">
    <property type="entry name" value="EGFBLOOD"/>
</dbReference>
<dbReference type="PRINTS" id="PR00001">
    <property type="entry name" value="GLABLOOD"/>
</dbReference>
<dbReference type="SMART" id="SM00181">
    <property type="entry name" value="EGF"/>
    <property type="match status" value="2"/>
</dbReference>
<dbReference type="SMART" id="SM00179">
    <property type="entry name" value="EGF_CA"/>
    <property type="match status" value="1"/>
</dbReference>
<dbReference type="SMART" id="SM00069">
    <property type="entry name" value="GLA"/>
    <property type="match status" value="1"/>
</dbReference>
<dbReference type="SMART" id="SM00020">
    <property type="entry name" value="Tryp_SPc"/>
    <property type="match status" value="1"/>
</dbReference>
<dbReference type="SUPFAM" id="SSF57196">
    <property type="entry name" value="EGF/Laminin"/>
    <property type="match status" value="2"/>
</dbReference>
<dbReference type="SUPFAM" id="SSF57630">
    <property type="entry name" value="GLA-domain"/>
    <property type="match status" value="1"/>
</dbReference>
<dbReference type="SUPFAM" id="SSF50494">
    <property type="entry name" value="Trypsin-like serine proteases"/>
    <property type="match status" value="1"/>
</dbReference>
<dbReference type="PROSITE" id="PS00010">
    <property type="entry name" value="ASX_HYDROXYL"/>
    <property type="match status" value="1"/>
</dbReference>
<dbReference type="PROSITE" id="PS00022">
    <property type="entry name" value="EGF_1"/>
    <property type="match status" value="1"/>
</dbReference>
<dbReference type="PROSITE" id="PS50026">
    <property type="entry name" value="EGF_3"/>
    <property type="match status" value="1"/>
</dbReference>
<dbReference type="PROSITE" id="PS01187">
    <property type="entry name" value="EGF_CA"/>
    <property type="match status" value="1"/>
</dbReference>
<dbReference type="PROSITE" id="PS00011">
    <property type="entry name" value="GLA_1"/>
    <property type="match status" value="1"/>
</dbReference>
<dbReference type="PROSITE" id="PS50998">
    <property type="entry name" value="GLA_2"/>
    <property type="match status" value="1"/>
</dbReference>
<dbReference type="PROSITE" id="PS50240">
    <property type="entry name" value="TRYPSIN_DOM"/>
    <property type="match status" value="1"/>
</dbReference>
<dbReference type="PROSITE" id="PS00134">
    <property type="entry name" value="TRYPSIN_HIS"/>
    <property type="match status" value="1"/>
</dbReference>
<dbReference type="PROSITE" id="PS00135">
    <property type="entry name" value="TRYPSIN_SER"/>
    <property type="match status" value="1"/>
</dbReference>
<accession>Q8K3U6</accession>